<accession>Q9USU1</accession>
<proteinExistence type="evidence at protein level"/>
<protein>
    <recommendedName>
        <fullName>Ras guanine nucleotide exchange factor efc25</fullName>
    </recommendedName>
    <alternativeName>
        <fullName>Exchange factor cdc25p-like protein</fullName>
    </alternativeName>
</protein>
<gene>
    <name type="primary">efc25</name>
    <name type="ORF">SPBC336.03</name>
</gene>
<dbReference type="EMBL" id="CU329671">
    <property type="protein sequence ID" value="CAB58155.1"/>
    <property type="molecule type" value="Genomic_DNA"/>
</dbReference>
<dbReference type="PIR" id="T40241">
    <property type="entry name" value="T40241"/>
</dbReference>
<dbReference type="RefSeq" id="NP_596123.1">
    <property type="nucleotide sequence ID" value="NM_001022041.2"/>
</dbReference>
<dbReference type="SMR" id="Q9USU1"/>
<dbReference type="BioGRID" id="276780">
    <property type="interactions" value="41"/>
</dbReference>
<dbReference type="FunCoup" id="Q9USU1">
    <property type="interactions" value="66"/>
</dbReference>
<dbReference type="STRING" id="284812.Q9USU1"/>
<dbReference type="iPTMnet" id="Q9USU1"/>
<dbReference type="PaxDb" id="4896-SPBC336.03.1"/>
<dbReference type="EnsemblFungi" id="SPBC336.03.1">
    <property type="protein sequence ID" value="SPBC336.03.1:pep"/>
    <property type="gene ID" value="SPBC336.03"/>
</dbReference>
<dbReference type="GeneID" id="2540248"/>
<dbReference type="KEGG" id="spo:2540248"/>
<dbReference type="PomBase" id="SPBC336.03">
    <property type="gene designation" value="efc25"/>
</dbReference>
<dbReference type="VEuPathDB" id="FungiDB:SPBC336.03"/>
<dbReference type="eggNOG" id="KOG3417">
    <property type="taxonomic scope" value="Eukaryota"/>
</dbReference>
<dbReference type="HOGENOM" id="CLU_302305_0_0_1"/>
<dbReference type="InParanoid" id="Q9USU1"/>
<dbReference type="OMA" id="NLWVQKY"/>
<dbReference type="Reactome" id="R-SPO-381676">
    <property type="pathway name" value="Glucagon-like Peptide-1 (GLP1) regulates insulin secretion"/>
</dbReference>
<dbReference type="Reactome" id="R-SPO-392517">
    <property type="pathway name" value="Rap1 signalling"/>
</dbReference>
<dbReference type="PRO" id="PR:Q9USU1"/>
<dbReference type="Proteomes" id="UP000002485">
    <property type="component" value="Chromosome II"/>
</dbReference>
<dbReference type="GO" id="GO:0005829">
    <property type="term" value="C:cytosol"/>
    <property type="evidence" value="ECO:0007005"/>
    <property type="project" value="PomBase"/>
</dbReference>
<dbReference type="GO" id="GO:0005886">
    <property type="term" value="C:plasma membrane"/>
    <property type="evidence" value="ECO:0000318"/>
    <property type="project" value="GO_Central"/>
</dbReference>
<dbReference type="GO" id="GO:0005085">
    <property type="term" value="F:guanyl-nucleotide exchange factor activity"/>
    <property type="evidence" value="ECO:0000315"/>
    <property type="project" value="PomBase"/>
</dbReference>
<dbReference type="GO" id="GO:0007059">
    <property type="term" value="P:chromosome segregation"/>
    <property type="evidence" value="ECO:0007669"/>
    <property type="project" value="UniProtKB-KW"/>
</dbReference>
<dbReference type="GO" id="GO:0007163">
    <property type="term" value="P:establishment or maintenance of cell polarity"/>
    <property type="evidence" value="ECO:0000315"/>
    <property type="project" value="PomBase"/>
</dbReference>
<dbReference type="GO" id="GO:0007265">
    <property type="term" value="P:Ras protein signal transduction"/>
    <property type="evidence" value="ECO:0000318"/>
    <property type="project" value="GO_Central"/>
</dbReference>
<dbReference type="GO" id="GO:0023052">
    <property type="term" value="P:signaling"/>
    <property type="evidence" value="ECO:0000303"/>
    <property type="project" value="PomBase"/>
</dbReference>
<dbReference type="CDD" id="cd00155">
    <property type="entry name" value="RasGEF"/>
    <property type="match status" value="1"/>
</dbReference>
<dbReference type="CDD" id="cd06224">
    <property type="entry name" value="REM"/>
    <property type="match status" value="1"/>
</dbReference>
<dbReference type="Gene3D" id="1.10.840.10">
    <property type="entry name" value="Ras guanine-nucleotide exchange factors catalytic domain"/>
    <property type="match status" value="1"/>
</dbReference>
<dbReference type="Gene3D" id="1.20.870.10">
    <property type="entry name" value="Son of sevenless (SoS) protein Chain: S domain 1"/>
    <property type="match status" value="1"/>
</dbReference>
<dbReference type="InterPro" id="IPR008937">
    <property type="entry name" value="Ras-like_GEF"/>
</dbReference>
<dbReference type="InterPro" id="IPR000651">
    <property type="entry name" value="Ras-like_Gua-exchang_fac_N"/>
</dbReference>
<dbReference type="InterPro" id="IPR023578">
    <property type="entry name" value="Ras_GEF_dom_sf"/>
</dbReference>
<dbReference type="InterPro" id="IPR001895">
    <property type="entry name" value="RASGEF_cat_dom"/>
</dbReference>
<dbReference type="InterPro" id="IPR036964">
    <property type="entry name" value="RASGEF_cat_dom_sf"/>
</dbReference>
<dbReference type="PANTHER" id="PTHR23113">
    <property type="entry name" value="GUANINE NUCLEOTIDE EXCHANGE FACTOR"/>
    <property type="match status" value="1"/>
</dbReference>
<dbReference type="PANTHER" id="PTHR23113:SF371">
    <property type="entry name" value="RAS GUANINE NUCLEOTIDE EXCHANGE FACTOR EFC25"/>
    <property type="match status" value="1"/>
</dbReference>
<dbReference type="Pfam" id="PF00617">
    <property type="entry name" value="RasGEF"/>
    <property type="match status" value="1"/>
</dbReference>
<dbReference type="Pfam" id="PF00618">
    <property type="entry name" value="RasGEF_N"/>
    <property type="match status" value="1"/>
</dbReference>
<dbReference type="SMART" id="SM00147">
    <property type="entry name" value="RasGEF"/>
    <property type="match status" value="1"/>
</dbReference>
<dbReference type="SMART" id="SM00229">
    <property type="entry name" value="RasGEFN"/>
    <property type="match status" value="1"/>
</dbReference>
<dbReference type="SUPFAM" id="SSF48366">
    <property type="entry name" value="Ras GEF"/>
    <property type="match status" value="1"/>
</dbReference>
<dbReference type="PROSITE" id="PS50009">
    <property type="entry name" value="RASGEF_CAT"/>
    <property type="match status" value="1"/>
</dbReference>
<dbReference type="PROSITE" id="PS50212">
    <property type="entry name" value="RASGEF_NTER"/>
    <property type="match status" value="1"/>
</dbReference>
<reference key="1">
    <citation type="journal article" date="1997" name="Gene">
        <title>Cloning and characterization of the S. pombe gene efc25+, a new putative guanine nucleotide exchange factor.</title>
        <authorList>
            <person name="Tratner I."/>
            <person name="Fourticq-Esqueoute A."/>
            <person name="Tillit J."/>
            <person name="Baldacci G."/>
        </authorList>
    </citation>
    <scope>NUCLEOTIDE SEQUENCE [GENOMIC DNA]</scope>
    <scope>FUNCTION</scope>
</reference>
<reference key="2">
    <citation type="journal article" date="2002" name="Nature">
        <title>The genome sequence of Schizosaccharomyces pombe.</title>
        <authorList>
            <person name="Wood V."/>
            <person name="Gwilliam R."/>
            <person name="Rajandream M.A."/>
            <person name="Lyne M.H."/>
            <person name="Lyne R."/>
            <person name="Stewart A."/>
            <person name="Sgouros J.G."/>
            <person name="Peat N."/>
            <person name="Hayles J."/>
            <person name="Baker S.G."/>
            <person name="Basham D."/>
            <person name="Bowman S."/>
            <person name="Brooks K."/>
            <person name="Brown D."/>
            <person name="Brown S."/>
            <person name="Chillingworth T."/>
            <person name="Churcher C.M."/>
            <person name="Collins M."/>
            <person name="Connor R."/>
            <person name="Cronin A."/>
            <person name="Davis P."/>
            <person name="Feltwell T."/>
            <person name="Fraser A."/>
            <person name="Gentles S."/>
            <person name="Goble A."/>
            <person name="Hamlin N."/>
            <person name="Harris D.E."/>
            <person name="Hidalgo J."/>
            <person name="Hodgson G."/>
            <person name="Holroyd S."/>
            <person name="Hornsby T."/>
            <person name="Howarth S."/>
            <person name="Huckle E.J."/>
            <person name="Hunt S."/>
            <person name="Jagels K."/>
            <person name="James K.D."/>
            <person name="Jones L."/>
            <person name="Jones M."/>
            <person name="Leather S."/>
            <person name="McDonald S."/>
            <person name="McLean J."/>
            <person name="Mooney P."/>
            <person name="Moule S."/>
            <person name="Mungall K.L."/>
            <person name="Murphy L.D."/>
            <person name="Niblett D."/>
            <person name="Odell C."/>
            <person name="Oliver K."/>
            <person name="O'Neil S."/>
            <person name="Pearson D."/>
            <person name="Quail M.A."/>
            <person name="Rabbinowitsch E."/>
            <person name="Rutherford K.M."/>
            <person name="Rutter S."/>
            <person name="Saunders D."/>
            <person name="Seeger K."/>
            <person name="Sharp S."/>
            <person name="Skelton J."/>
            <person name="Simmonds M.N."/>
            <person name="Squares R."/>
            <person name="Squares S."/>
            <person name="Stevens K."/>
            <person name="Taylor K."/>
            <person name="Taylor R.G."/>
            <person name="Tivey A."/>
            <person name="Walsh S.V."/>
            <person name="Warren T."/>
            <person name="Whitehead S."/>
            <person name="Woodward J.R."/>
            <person name="Volckaert G."/>
            <person name="Aert R."/>
            <person name="Robben J."/>
            <person name="Grymonprez B."/>
            <person name="Weltjens I."/>
            <person name="Vanstreels E."/>
            <person name="Rieger M."/>
            <person name="Schaefer M."/>
            <person name="Mueller-Auer S."/>
            <person name="Gabel C."/>
            <person name="Fuchs M."/>
            <person name="Duesterhoeft A."/>
            <person name="Fritzc C."/>
            <person name="Holzer E."/>
            <person name="Moestl D."/>
            <person name="Hilbert H."/>
            <person name="Borzym K."/>
            <person name="Langer I."/>
            <person name="Beck A."/>
            <person name="Lehrach H."/>
            <person name="Reinhardt R."/>
            <person name="Pohl T.M."/>
            <person name="Eger P."/>
            <person name="Zimmermann W."/>
            <person name="Wedler H."/>
            <person name="Wambutt R."/>
            <person name="Purnelle B."/>
            <person name="Goffeau A."/>
            <person name="Cadieu E."/>
            <person name="Dreano S."/>
            <person name="Gloux S."/>
            <person name="Lelaure V."/>
            <person name="Mottier S."/>
            <person name="Galibert F."/>
            <person name="Aves S.J."/>
            <person name="Xiang Z."/>
            <person name="Hunt C."/>
            <person name="Moore K."/>
            <person name="Hurst S.M."/>
            <person name="Lucas M."/>
            <person name="Rochet M."/>
            <person name="Gaillardin C."/>
            <person name="Tallada V.A."/>
            <person name="Garzon A."/>
            <person name="Thode G."/>
            <person name="Daga R.R."/>
            <person name="Cruzado L."/>
            <person name="Jimenez J."/>
            <person name="Sanchez M."/>
            <person name="del Rey F."/>
            <person name="Benito J."/>
            <person name="Dominguez A."/>
            <person name="Revuelta J.L."/>
            <person name="Moreno S."/>
            <person name="Armstrong J."/>
            <person name="Forsburg S.L."/>
            <person name="Cerutti L."/>
            <person name="Lowe T."/>
            <person name="McCombie W.R."/>
            <person name="Paulsen I."/>
            <person name="Potashkin J."/>
            <person name="Shpakovski G.V."/>
            <person name="Ussery D."/>
            <person name="Barrell B.G."/>
            <person name="Nurse P."/>
        </authorList>
    </citation>
    <scope>NUCLEOTIDE SEQUENCE [LARGE SCALE GENOMIC DNA]</scope>
    <source>
        <strain>972 / ATCC 24843</strain>
    </source>
</reference>
<reference key="3">
    <citation type="journal article" date="2002" name="Mol. Cell. Biol.">
        <title>Two ras pathways in fission yeast are differentially regulated by two ras guanine nucleotide exchange factors.</title>
        <authorList>
            <person name="Papadaki P."/>
            <person name="Pizon V."/>
            <person name="Onken B."/>
            <person name="Chang E.C."/>
        </authorList>
    </citation>
    <scope>FUNCTION</scope>
    <source>
        <strain>SP870</strain>
    </source>
</reference>
<reference key="4">
    <citation type="journal article" date="2006" name="Nat. Biotechnol.">
        <title>ORFeome cloning and global analysis of protein localization in the fission yeast Schizosaccharomyces pombe.</title>
        <authorList>
            <person name="Matsuyama A."/>
            <person name="Arai R."/>
            <person name="Yashiroda Y."/>
            <person name="Shirai A."/>
            <person name="Kamata A."/>
            <person name="Sekido S."/>
            <person name="Kobayashi Y."/>
            <person name="Hashimoto A."/>
            <person name="Hamamoto M."/>
            <person name="Hiraoka Y."/>
            <person name="Horinouchi S."/>
            <person name="Yoshida M."/>
        </authorList>
    </citation>
    <scope>SUBCELLULAR LOCATION [LARGE SCALE ANALYSIS]</scope>
</reference>
<reference key="5">
    <citation type="journal article" date="2008" name="J. Proteome Res.">
        <title>Phosphoproteome analysis of fission yeast.</title>
        <authorList>
            <person name="Wilson-Grady J.T."/>
            <person name="Villen J."/>
            <person name="Gygi S.P."/>
        </authorList>
    </citation>
    <scope>PHOSPHORYLATION [LARGE SCALE ANALYSIS] AT SER-552</scope>
    <scope>IDENTIFICATION BY MASS SPECTROMETRY</scope>
</reference>
<organism>
    <name type="scientific">Schizosaccharomyces pombe (strain 972 / ATCC 24843)</name>
    <name type="common">Fission yeast</name>
    <dbReference type="NCBI Taxonomy" id="284812"/>
    <lineage>
        <taxon>Eukaryota</taxon>
        <taxon>Fungi</taxon>
        <taxon>Dikarya</taxon>
        <taxon>Ascomycota</taxon>
        <taxon>Taphrinomycotina</taxon>
        <taxon>Schizosaccharomycetes</taxon>
        <taxon>Schizosaccharomycetales</taxon>
        <taxon>Schizosaccharomycetaceae</taxon>
        <taxon>Schizosaccharomyces</taxon>
    </lineage>
</organism>
<comment type="function">
    <text evidence="4 7">Has a role in chromosome segregation and cell morphology upstream of the ras1-scd1 pathway. Promotes the exchange of ras1-bound GDP by GTP leading to its activation.</text>
</comment>
<comment type="subcellular location">
    <subcellularLocation>
        <location evidence="5">Cytoplasm</location>
    </subcellularLocation>
</comment>
<sequence length="987" mass="112730">MRRPNLDRLRLKSRQGFETSVSKPSTPSYSTYSLSPTFSDKSVLSPSTMSDSYALSSTYTAGSSYQNGESDYFGSLPTPSSDKSSTSPFPYLKGSFDDRFSSTHSLTRQPSPRSPLTPLKGNTRASPEIRYVSDFTPPSSPFEDMQASVHSLPLSGCSIGPVRTNHSSSLSNSSNSLLQTESSLRPNSSFVNSPFFPLPSSDDLFLNDRVINLFLFYEKFSYLFTHLLSAIKSRDALSIPSLVLSLQEELFNLCQQTGTFYLLQHNLLQNFEFENPIKLHFDKIIPYFSRLTVLTFSNRAFIFPDHTFPRLQQSAEDFLYHLQFFFTLCANNSLYLSRFCYYPSFVPNTPFGGKWTNNGLSAVSSAYRTRLLEPCLPELDKCVWFLLKNCDEFIENFSDFADEEYVFEICSTITSHSEQIFNKLESWDMSIYFDKDLSECEQATNFAVQSYFVTKQRCYDLLTDLVCSSQDLMMEHSNDFSTMPTMIASIAVAFQTLFENVCDFLKVRAALVDEMQELATKEFENKFSNANTAKDDEPARQTNKGTTRISRSSDFTAVSEMSKDTLTLGRNSLQSILMLDNLLTNKVVQSDNNVKGGTLPALVHYLVQNVHLNKDFRHSFLLTYKTFTTPQELFTLLVILFHELPPPGLDATAYSSWEKGDNFVTKKNVCTVMNLWVQKYFFEDLKARNTLYLISEMRTFLRDHVVPSFHIGSVILSEIDNLWTEEPPDSLTQRLLSSPMATFISLNVYAYTPEEFASQMTLLEFDYLKQIPSREWIFRSWVSRDSRSAVRNYINFSNCFTYWIINCILEKKNTKARTAVISFFIQTAYKCLSLQNFSTLMSIVSALNSAPIYRLHAAYKLVKAEDIICLSGLREIVETKKNFSTYRALLRKAELPCVPFLGVILSDLTFIDEGNPDVLDSSPHLLSFNKRHRLADVVADVCRFQSSSYEMQSNTDLQSYILHRCRFVNQDLSYLFDKSLSLEPRSS</sequence>
<feature type="chain" id="PRO_0000372377" description="Ras guanine nucleotide exchange factor efc25">
    <location>
        <begin position="1"/>
        <end position="987"/>
    </location>
</feature>
<feature type="domain" description="N-terminal Ras-GEF" evidence="1">
    <location>
        <begin position="590"/>
        <end position="723"/>
    </location>
</feature>
<feature type="domain" description="Ras-GEF" evidence="2">
    <location>
        <begin position="752"/>
        <end position="985"/>
    </location>
</feature>
<feature type="region of interest" description="Disordered" evidence="3">
    <location>
        <begin position="1"/>
        <end position="50"/>
    </location>
</feature>
<feature type="region of interest" description="Disordered" evidence="3">
    <location>
        <begin position="100"/>
        <end position="130"/>
    </location>
</feature>
<feature type="region of interest" description="Disordered" evidence="3">
    <location>
        <begin position="529"/>
        <end position="552"/>
    </location>
</feature>
<feature type="compositionally biased region" description="Basic and acidic residues" evidence="3">
    <location>
        <begin position="1"/>
        <end position="10"/>
    </location>
</feature>
<feature type="compositionally biased region" description="Low complexity" evidence="3">
    <location>
        <begin position="19"/>
        <end position="39"/>
    </location>
</feature>
<feature type="compositionally biased region" description="Polar residues" evidence="3">
    <location>
        <begin position="40"/>
        <end position="50"/>
    </location>
</feature>
<feature type="compositionally biased region" description="Polar residues" evidence="3">
    <location>
        <begin position="102"/>
        <end position="111"/>
    </location>
</feature>
<feature type="compositionally biased region" description="Polar residues" evidence="3">
    <location>
        <begin position="540"/>
        <end position="552"/>
    </location>
</feature>
<feature type="modified residue" description="Phosphoserine" evidence="6">
    <location>
        <position position="552"/>
    </location>
</feature>
<evidence type="ECO:0000255" key="1">
    <source>
        <dbReference type="PROSITE-ProRule" id="PRU00135"/>
    </source>
</evidence>
<evidence type="ECO:0000255" key="2">
    <source>
        <dbReference type="PROSITE-ProRule" id="PRU00168"/>
    </source>
</evidence>
<evidence type="ECO:0000256" key="3">
    <source>
        <dbReference type="SAM" id="MobiDB-lite"/>
    </source>
</evidence>
<evidence type="ECO:0000269" key="4">
    <source>
    </source>
</evidence>
<evidence type="ECO:0000269" key="5">
    <source>
    </source>
</evidence>
<evidence type="ECO:0000269" key="6">
    <source>
    </source>
</evidence>
<evidence type="ECO:0000269" key="7">
    <source>
    </source>
</evidence>
<keyword id="KW-0159">Chromosome partition</keyword>
<keyword id="KW-0963">Cytoplasm</keyword>
<keyword id="KW-0344">Guanine-nucleotide releasing factor</keyword>
<keyword id="KW-0597">Phosphoprotein</keyword>
<keyword id="KW-1185">Reference proteome</keyword>
<name>EFC25_SCHPO</name>